<protein>
    <recommendedName>
        <fullName evidence="1">Small ribosomal subunit protein uS19</fullName>
    </recommendedName>
    <alternativeName>
        <fullName evidence="2">30S ribosomal protein S19</fullName>
    </alternativeName>
</protein>
<accession>Q8GM56</accession>
<accession>D1J882</accession>
<name>RS19_METH1</name>
<evidence type="ECO:0000255" key="1">
    <source>
        <dbReference type="HAMAP-Rule" id="MF_00531"/>
    </source>
</evidence>
<evidence type="ECO:0000305" key="2"/>
<gene>
    <name evidence="1" type="primary">rpsS</name>
    <name type="ordered locus">MHO_2940</name>
</gene>
<proteinExistence type="inferred from homology"/>
<feature type="chain" id="PRO_0000129851" description="Small ribosomal subunit protein uS19">
    <location>
        <begin position="1"/>
        <end position="91"/>
    </location>
</feature>
<organism>
    <name type="scientific">Metamycoplasma hominis (strain ATCC 23114 / DSM 25592 / NBRC 14850 / NCTC 10111 / PG21)</name>
    <name type="common">Mycoplasma hominis</name>
    <dbReference type="NCBI Taxonomy" id="347256"/>
    <lineage>
        <taxon>Bacteria</taxon>
        <taxon>Bacillati</taxon>
        <taxon>Mycoplasmatota</taxon>
        <taxon>Mycoplasmoidales</taxon>
        <taxon>Metamycoplasmataceae</taxon>
        <taxon>Metamycoplasma</taxon>
    </lineage>
</organism>
<comment type="function">
    <text evidence="1">Protein S19 forms a complex with S13 that binds strongly to the 16S ribosomal RNA.</text>
</comment>
<comment type="similarity">
    <text evidence="1">Belongs to the universal ribosomal protein uS19 family.</text>
</comment>
<sequence>MARSLKKAPFVDDHLMKKVLAIIENKSPKRPIKTWSRRSTIYPEFIGLTFQVHNGHAFIDVFVTNDMVGHKLGEFAPTRTFNGHGADKGKK</sequence>
<reference key="1">
    <citation type="journal article" date="2002" name="Antimicrob. Agents Chemother.">
        <title>Mutations in 23S rRNA account for intrinsic resistance to macrolides in Mycoplasma hominis and Mycoplasma fermentans and for acquired resistance to macrolides in M. hominis.</title>
        <authorList>
            <person name="Pereyre S."/>
            <person name="Gonzalez P."/>
            <person name="De Barbeyrac B."/>
            <person name="Darnige A."/>
            <person name="Renaudin H."/>
            <person name="Charron A."/>
            <person name="Raherison S."/>
            <person name="Bebear C."/>
            <person name="Bebear C.M."/>
        </authorList>
    </citation>
    <scope>NUCLEOTIDE SEQUENCE [GENOMIC DNA]</scope>
</reference>
<reference key="2">
    <citation type="journal article" date="2009" name="PLoS Genet.">
        <title>Life on arginine for Mycoplasma hominis: clues from its minimal genome and comparison with other human urogenital mycoplasmas.</title>
        <authorList>
            <person name="Pereyre S."/>
            <person name="Sirand-Pugnet P."/>
            <person name="Beven L."/>
            <person name="Charron A."/>
            <person name="Renaudin H."/>
            <person name="Barre A."/>
            <person name="Avenaud P."/>
            <person name="Jacob D."/>
            <person name="Couloux A."/>
            <person name="Barbe V."/>
            <person name="de Daruvar A."/>
            <person name="Blanchard A."/>
            <person name="Bebear C."/>
        </authorList>
    </citation>
    <scope>NUCLEOTIDE SEQUENCE [LARGE SCALE GENOMIC DNA]</scope>
    <source>
        <strain>ATCC 23114 / DSM 25592 / NBRC 14850 / NCTC 10111 / PG21</strain>
    </source>
</reference>
<keyword id="KW-1185">Reference proteome</keyword>
<keyword id="KW-0687">Ribonucleoprotein</keyword>
<keyword id="KW-0689">Ribosomal protein</keyword>
<keyword id="KW-0694">RNA-binding</keyword>
<keyword id="KW-0699">rRNA-binding</keyword>
<dbReference type="EMBL" id="AY083306">
    <property type="protein sequence ID" value="AAM08939.1"/>
    <property type="molecule type" value="Genomic_DNA"/>
</dbReference>
<dbReference type="EMBL" id="FP236530">
    <property type="protein sequence ID" value="CAX37429.1"/>
    <property type="molecule type" value="Genomic_DNA"/>
</dbReference>
<dbReference type="RefSeq" id="WP_012855570.1">
    <property type="nucleotide sequence ID" value="NC_013511.1"/>
</dbReference>
<dbReference type="SMR" id="Q8GM56"/>
<dbReference type="STRING" id="347256.MHO_2940"/>
<dbReference type="PaxDb" id="347256-MHO_2940"/>
<dbReference type="GeneID" id="89679318"/>
<dbReference type="KEGG" id="mho:MHO_2940"/>
<dbReference type="eggNOG" id="COG0185">
    <property type="taxonomic scope" value="Bacteria"/>
</dbReference>
<dbReference type="HOGENOM" id="CLU_144911_0_1_14"/>
<dbReference type="Proteomes" id="UP000002631">
    <property type="component" value="Chromosome"/>
</dbReference>
<dbReference type="GO" id="GO:0005737">
    <property type="term" value="C:cytoplasm"/>
    <property type="evidence" value="ECO:0007669"/>
    <property type="project" value="UniProtKB-ARBA"/>
</dbReference>
<dbReference type="GO" id="GO:0015935">
    <property type="term" value="C:small ribosomal subunit"/>
    <property type="evidence" value="ECO:0007669"/>
    <property type="project" value="InterPro"/>
</dbReference>
<dbReference type="GO" id="GO:0019843">
    <property type="term" value="F:rRNA binding"/>
    <property type="evidence" value="ECO:0007669"/>
    <property type="project" value="UniProtKB-UniRule"/>
</dbReference>
<dbReference type="GO" id="GO:0003735">
    <property type="term" value="F:structural constituent of ribosome"/>
    <property type="evidence" value="ECO:0007669"/>
    <property type="project" value="InterPro"/>
</dbReference>
<dbReference type="GO" id="GO:0000028">
    <property type="term" value="P:ribosomal small subunit assembly"/>
    <property type="evidence" value="ECO:0007669"/>
    <property type="project" value="TreeGrafter"/>
</dbReference>
<dbReference type="GO" id="GO:0006412">
    <property type="term" value="P:translation"/>
    <property type="evidence" value="ECO:0007669"/>
    <property type="project" value="UniProtKB-UniRule"/>
</dbReference>
<dbReference type="FunFam" id="3.30.860.10:FF:000001">
    <property type="entry name" value="30S ribosomal protein S19"/>
    <property type="match status" value="1"/>
</dbReference>
<dbReference type="Gene3D" id="3.30.860.10">
    <property type="entry name" value="30s Ribosomal Protein S19, Chain A"/>
    <property type="match status" value="1"/>
</dbReference>
<dbReference type="HAMAP" id="MF_00531">
    <property type="entry name" value="Ribosomal_uS19"/>
    <property type="match status" value="1"/>
</dbReference>
<dbReference type="InterPro" id="IPR002222">
    <property type="entry name" value="Ribosomal_uS19"/>
</dbReference>
<dbReference type="InterPro" id="IPR005732">
    <property type="entry name" value="Ribosomal_uS19_bac-type"/>
</dbReference>
<dbReference type="InterPro" id="IPR020934">
    <property type="entry name" value="Ribosomal_uS19_CS"/>
</dbReference>
<dbReference type="InterPro" id="IPR023575">
    <property type="entry name" value="Ribosomal_uS19_SF"/>
</dbReference>
<dbReference type="NCBIfam" id="TIGR01050">
    <property type="entry name" value="rpsS_bact"/>
    <property type="match status" value="1"/>
</dbReference>
<dbReference type="PANTHER" id="PTHR11880">
    <property type="entry name" value="RIBOSOMAL PROTEIN S19P FAMILY MEMBER"/>
    <property type="match status" value="1"/>
</dbReference>
<dbReference type="PANTHER" id="PTHR11880:SF8">
    <property type="entry name" value="SMALL RIBOSOMAL SUBUNIT PROTEIN US19M"/>
    <property type="match status" value="1"/>
</dbReference>
<dbReference type="Pfam" id="PF00203">
    <property type="entry name" value="Ribosomal_S19"/>
    <property type="match status" value="1"/>
</dbReference>
<dbReference type="PIRSF" id="PIRSF002144">
    <property type="entry name" value="Ribosomal_S19"/>
    <property type="match status" value="1"/>
</dbReference>
<dbReference type="PRINTS" id="PR00975">
    <property type="entry name" value="RIBOSOMALS19"/>
</dbReference>
<dbReference type="SUPFAM" id="SSF54570">
    <property type="entry name" value="Ribosomal protein S19"/>
    <property type="match status" value="1"/>
</dbReference>
<dbReference type="PROSITE" id="PS00323">
    <property type="entry name" value="RIBOSOMAL_S19"/>
    <property type="match status" value="1"/>
</dbReference>